<evidence type="ECO:0000255" key="1">
    <source>
        <dbReference type="HAMAP-Rule" id="MF_00909"/>
    </source>
</evidence>
<evidence type="ECO:0000256" key="2">
    <source>
        <dbReference type="SAM" id="MobiDB-lite"/>
    </source>
</evidence>
<organism>
    <name type="scientific">Staphylococcus aureus (strain N315)</name>
    <dbReference type="NCBI Taxonomy" id="158879"/>
    <lineage>
        <taxon>Bacteria</taxon>
        <taxon>Bacillati</taxon>
        <taxon>Bacillota</taxon>
        <taxon>Bacilli</taxon>
        <taxon>Bacillales</taxon>
        <taxon>Staphylococcaceae</taxon>
        <taxon>Staphylococcus</taxon>
    </lineage>
</organism>
<keyword id="KW-0131">Cell cycle</keyword>
<keyword id="KW-0132">Cell division</keyword>
<keyword id="KW-0963">Cytoplasm</keyword>
<keyword id="KW-0342">GTP-binding</keyword>
<keyword id="KW-0547">Nucleotide-binding</keyword>
<keyword id="KW-0717">Septation</keyword>
<protein>
    <recommendedName>
        <fullName evidence="1">Cell division protein FtsZ</fullName>
    </recommendedName>
</protein>
<name>FTSZ_STAAN</name>
<gene>
    <name evidence="1" type="primary">ftsZ</name>
    <name type="ordered locus">SA1029</name>
</gene>
<accession>P99108</accession>
<accession>P45498</accession>
<dbReference type="EMBL" id="BA000018">
    <property type="protein sequence ID" value="BAB42281.1"/>
    <property type="molecule type" value="Genomic_DNA"/>
</dbReference>
<dbReference type="RefSeq" id="WP_000888997.1">
    <property type="nucleotide sequence ID" value="NC_002745.2"/>
</dbReference>
<dbReference type="SMR" id="P99108"/>
<dbReference type="EnsemblBacteria" id="BAB42281">
    <property type="protein sequence ID" value="BAB42281"/>
    <property type="gene ID" value="BAB42281"/>
</dbReference>
<dbReference type="GeneID" id="98345502"/>
<dbReference type="KEGG" id="sau:SA1029"/>
<dbReference type="HOGENOM" id="CLU_024865_0_1_9"/>
<dbReference type="GO" id="GO:0032153">
    <property type="term" value="C:cell division site"/>
    <property type="evidence" value="ECO:0007669"/>
    <property type="project" value="UniProtKB-UniRule"/>
</dbReference>
<dbReference type="GO" id="GO:0005737">
    <property type="term" value="C:cytoplasm"/>
    <property type="evidence" value="ECO:0007669"/>
    <property type="project" value="UniProtKB-SubCell"/>
</dbReference>
<dbReference type="GO" id="GO:0005525">
    <property type="term" value="F:GTP binding"/>
    <property type="evidence" value="ECO:0007669"/>
    <property type="project" value="UniProtKB-UniRule"/>
</dbReference>
<dbReference type="GO" id="GO:0003924">
    <property type="term" value="F:GTPase activity"/>
    <property type="evidence" value="ECO:0007669"/>
    <property type="project" value="UniProtKB-UniRule"/>
</dbReference>
<dbReference type="GO" id="GO:0000917">
    <property type="term" value="P:division septum assembly"/>
    <property type="evidence" value="ECO:0007669"/>
    <property type="project" value="UniProtKB-KW"/>
</dbReference>
<dbReference type="GO" id="GO:0043093">
    <property type="term" value="P:FtsZ-dependent cytokinesis"/>
    <property type="evidence" value="ECO:0007669"/>
    <property type="project" value="UniProtKB-UniRule"/>
</dbReference>
<dbReference type="GO" id="GO:0051258">
    <property type="term" value="P:protein polymerization"/>
    <property type="evidence" value="ECO:0007669"/>
    <property type="project" value="UniProtKB-UniRule"/>
</dbReference>
<dbReference type="CDD" id="cd02201">
    <property type="entry name" value="FtsZ_type1"/>
    <property type="match status" value="1"/>
</dbReference>
<dbReference type="FunFam" id="3.30.1330.20:FF:000005">
    <property type="entry name" value="Cell division protein FtsZ"/>
    <property type="match status" value="1"/>
</dbReference>
<dbReference type="FunFam" id="3.40.50.1440:FF:000023">
    <property type="entry name" value="Cell division protein FtsZ"/>
    <property type="match status" value="1"/>
</dbReference>
<dbReference type="Gene3D" id="3.30.1330.20">
    <property type="entry name" value="Tubulin/FtsZ, C-terminal domain"/>
    <property type="match status" value="1"/>
</dbReference>
<dbReference type="Gene3D" id="3.40.50.1440">
    <property type="entry name" value="Tubulin/FtsZ, GTPase domain"/>
    <property type="match status" value="1"/>
</dbReference>
<dbReference type="HAMAP" id="MF_00909">
    <property type="entry name" value="FtsZ"/>
    <property type="match status" value="1"/>
</dbReference>
<dbReference type="InterPro" id="IPR000158">
    <property type="entry name" value="Cell_div_FtsZ"/>
</dbReference>
<dbReference type="InterPro" id="IPR020805">
    <property type="entry name" value="Cell_div_FtsZ_CS"/>
</dbReference>
<dbReference type="InterPro" id="IPR045061">
    <property type="entry name" value="FtsZ/CetZ"/>
</dbReference>
<dbReference type="InterPro" id="IPR024757">
    <property type="entry name" value="FtsZ_C"/>
</dbReference>
<dbReference type="InterPro" id="IPR008280">
    <property type="entry name" value="Tub_FtsZ_C"/>
</dbReference>
<dbReference type="InterPro" id="IPR037103">
    <property type="entry name" value="Tubulin/FtsZ-like_C"/>
</dbReference>
<dbReference type="InterPro" id="IPR018316">
    <property type="entry name" value="Tubulin/FtsZ_2-layer-sand-dom"/>
</dbReference>
<dbReference type="InterPro" id="IPR036525">
    <property type="entry name" value="Tubulin/FtsZ_GTPase_sf"/>
</dbReference>
<dbReference type="InterPro" id="IPR003008">
    <property type="entry name" value="Tubulin_FtsZ_GTPase"/>
</dbReference>
<dbReference type="NCBIfam" id="TIGR00065">
    <property type="entry name" value="ftsZ"/>
    <property type="match status" value="1"/>
</dbReference>
<dbReference type="PANTHER" id="PTHR30314">
    <property type="entry name" value="CELL DIVISION PROTEIN FTSZ-RELATED"/>
    <property type="match status" value="1"/>
</dbReference>
<dbReference type="PANTHER" id="PTHR30314:SF3">
    <property type="entry name" value="MITOCHONDRIAL DIVISION PROTEIN FSZA"/>
    <property type="match status" value="1"/>
</dbReference>
<dbReference type="Pfam" id="PF12327">
    <property type="entry name" value="FtsZ_C"/>
    <property type="match status" value="1"/>
</dbReference>
<dbReference type="Pfam" id="PF00091">
    <property type="entry name" value="Tubulin"/>
    <property type="match status" value="1"/>
</dbReference>
<dbReference type="PRINTS" id="PR00423">
    <property type="entry name" value="CELLDVISFTSZ"/>
</dbReference>
<dbReference type="SMART" id="SM00864">
    <property type="entry name" value="Tubulin"/>
    <property type="match status" value="1"/>
</dbReference>
<dbReference type="SMART" id="SM00865">
    <property type="entry name" value="Tubulin_C"/>
    <property type="match status" value="1"/>
</dbReference>
<dbReference type="SUPFAM" id="SSF55307">
    <property type="entry name" value="Tubulin C-terminal domain-like"/>
    <property type="match status" value="1"/>
</dbReference>
<dbReference type="SUPFAM" id="SSF52490">
    <property type="entry name" value="Tubulin nucleotide-binding domain-like"/>
    <property type="match status" value="1"/>
</dbReference>
<dbReference type="PROSITE" id="PS01134">
    <property type="entry name" value="FTSZ_1"/>
    <property type="match status" value="1"/>
</dbReference>
<dbReference type="PROSITE" id="PS01135">
    <property type="entry name" value="FTSZ_2"/>
    <property type="match status" value="1"/>
</dbReference>
<sequence length="390" mass="41037">MLEFEQGFNHLATLKVIGVGGGGNNAVNRMIDHGMNNVEFIAINTDGQALNLSKAESKIQIGEKLTRGLGAGANPEIGKKAAEESREQIEDAIQGADMVFVTSGMGGGTGTGAAPVVAKIAKEMGALTVGVVTRPFSFEGRKRQTQAAAGVEAMKAAVDTLIVIPNDRLLDIVDKSTPMMEAFKEADNVLRQGVQGISDLIAVSGEVNLDFADVKTIMSNQGSALMGIGVSSGENRAVEAAKKAISSPLLETSIVGAQGVLMNITGGESLSLFEAQEAADIVQDAADEDVNMIFGTVINPELQDEIVVTVIATGFDDKPTSHGRKSGSTGFGTSVNTSSNATSKDESFTSNSSNAQATDSVSERTHTTKEDDIPSFIRNREERRSRRTRR</sequence>
<reference key="1">
    <citation type="journal article" date="2001" name="Lancet">
        <title>Whole genome sequencing of meticillin-resistant Staphylococcus aureus.</title>
        <authorList>
            <person name="Kuroda M."/>
            <person name="Ohta T."/>
            <person name="Uchiyama I."/>
            <person name="Baba T."/>
            <person name="Yuzawa H."/>
            <person name="Kobayashi I."/>
            <person name="Cui L."/>
            <person name="Oguchi A."/>
            <person name="Aoki K."/>
            <person name="Nagai Y."/>
            <person name="Lian J.-Q."/>
            <person name="Ito T."/>
            <person name="Kanamori M."/>
            <person name="Matsumaru H."/>
            <person name="Maruyama A."/>
            <person name="Murakami H."/>
            <person name="Hosoyama A."/>
            <person name="Mizutani-Ui Y."/>
            <person name="Takahashi N.K."/>
            <person name="Sawano T."/>
            <person name="Inoue R."/>
            <person name="Kaito C."/>
            <person name="Sekimizu K."/>
            <person name="Hirakawa H."/>
            <person name="Kuhara S."/>
            <person name="Goto S."/>
            <person name="Yabuzaki J."/>
            <person name="Kanehisa M."/>
            <person name="Yamashita A."/>
            <person name="Oshima K."/>
            <person name="Furuya K."/>
            <person name="Yoshino C."/>
            <person name="Shiba T."/>
            <person name="Hattori M."/>
            <person name="Ogasawara N."/>
            <person name="Hayashi H."/>
            <person name="Hiramatsu K."/>
        </authorList>
    </citation>
    <scope>NUCLEOTIDE SEQUENCE [LARGE SCALE GENOMIC DNA]</scope>
    <source>
        <strain>N315</strain>
    </source>
</reference>
<reference key="2">
    <citation type="journal article" date="2005" name="J. Microbiol. Methods">
        <title>Correlation of proteomic and transcriptomic profiles of Staphylococcus aureus during the post-exponential phase of growth.</title>
        <authorList>
            <person name="Scherl A."/>
            <person name="Francois P."/>
            <person name="Bento M."/>
            <person name="Deshusses J.M."/>
            <person name="Charbonnier Y."/>
            <person name="Converset V."/>
            <person name="Huyghe A."/>
            <person name="Walter N."/>
            <person name="Hoogland C."/>
            <person name="Appel R.D."/>
            <person name="Sanchez J.-C."/>
            <person name="Zimmermann-Ivol C.G."/>
            <person name="Corthals G.L."/>
            <person name="Hochstrasser D.F."/>
            <person name="Schrenzel J."/>
        </authorList>
    </citation>
    <scope>IDENTIFICATION BY MASS SPECTROMETRY</scope>
    <source>
        <strain>N315</strain>
    </source>
</reference>
<reference key="3">
    <citation type="submission" date="2007-10" db="UniProtKB">
        <title>Shotgun proteomic analysis of total and membrane protein extracts of S. aureus strain N315.</title>
        <authorList>
            <person name="Vaezzadeh A.R."/>
            <person name="Deshusses J."/>
            <person name="Lescuyer P."/>
            <person name="Hochstrasser D.F."/>
        </authorList>
    </citation>
    <scope>IDENTIFICATION BY MASS SPECTROMETRY [LARGE SCALE ANALYSIS]</scope>
    <source>
        <strain>N315</strain>
    </source>
</reference>
<feature type="chain" id="PRO_0000114381" description="Cell division protein FtsZ">
    <location>
        <begin position="1"/>
        <end position="390"/>
    </location>
</feature>
<feature type="region of interest" description="Disordered" evidence="2">
    <location>
        <begin position="315"/>
        <end position="390"/>
    </location>
</feature>
<feature type="compositionally biased region" description="Polar residues" evidence="2">
    <location>
        <begin position="326"/>
        <end position="360"/>
    </location>
</feature>
<feature type="compositionally biased region" description="Basic and acidic residues" evidence="2">
    <location>
        <begin position="361"/>
        <end position="384"/>
    </location>
</feature>
<feature type="binding site" evidence="1">
    <location>
        <begin position="21"/>
        <end position="25"/>
    </location>
    <ligand>
        <name>GTP</name>
        <dbReference type="ChEBI" id="CHEBI:37565"/>
    </ligand>
</feature>
<feature type="binding site" evidence="1">
    <location>
        <begin position="108"/>
        <end position="110"/>
    </location>
    <ligand>
        <name>GTP</name>
        <dbReference type="ChEBI" id="CHEBI:37565"/>
    </ligand>
</feature>
<feature type="binding site" evidence="1">
    <location>
        <position position="139"/>
    </location>
    <ligand>
        <name>GTP</name>
        <dbReference type="ChEBI" id="CHEBI:37565"/>
    </ligand>
</feature>
<feature type="binding site" evidence="1">
    <location>
        <position position="143"/>
    </location>
    <ligand>
        <name>GTP</name>
        <dbReference type="ChEBI" id="CHEBI:37565"/>
    </ligand>
</feature>
<feature type="binding site" evidence="1">
    <location>
        <position position="187"/>
    </location>
    <ligand>
        <name>GTP</name>
        <dbReference type="ChEBI" id="CHEBI:37565"/>
    </ligand>
</feature>
<comment type="function">
    <text evidence="1">Essential cell division protein that forms a contractile ring structure (Z ring) at the future cell division site. The regulation of the ring assembly controls the timing and the location of cell division. One of the functions of the FtsZ ring is to recruit other cell division proteins to the septum to produce a new cell wall between the dividing cells. Binds GTP and shows GTPase activity.</text>
</comment>
<comment type="subunit">
    <text evidence="1">Homodimer. Polymerizes to form a dynamic ring structure in a strictly GTP-dependent manner. Interacts directly with several other division proteins.</text>
</comment>
<comment type="subcellular location">
    <subcellularLocation>
        <location evidence="1">Cytoplasm</location>
    </subcellularLocation>
    <text evidence="1">Assembles at midcell at the inner surface of the cytoplasmic membrane.</text>
</comment>
<comment type="similarity">
    <text evidence="1">Belongs to the FtsZ family.</text>
</comment>
<proteinExistence type="evidence at protein level"/>